<feature type="chain" id="PRO_0000388845" description="UPF0756 membrane protein Daud_1310">
    <location>
        <begin position="1"/>
        <end position="152"/>
    </location>
</feature>
<feature type="transmembrane region" description="Helical" evidence="1">
    <location>
        <begin position="14"/>
        <end position="34"/>
    </location>
</feature>
<feature type="transmembrane region" description="Helical" evidence="1">
    <location>
        <begin position="51"/>
        <end position="71"/>
    </location>
</feature>
<feature type="transmembrane region" description="Helical" evidence="1">
    <location>
        <begin position="76"/>
        <end position="96"/>
    </location>
</feature>
<feature type="transmembrane region" description="Helical" evidence="1">
    <location>
        <begin position="112"/>
        <end position="132"/>
    </location>
</feature>
<reference key="1">
    <citation type="submission" date="2007-10" db="EMBL/GenBank/DDBJ databases">
        <title>Complete sequence of chromosome of Desulforudis audaxviator MP104C.</title>
        <authorList>
            <person name="Copeland A."/>
            <person name="Lucas S."/>
            <person name="Lapidus A."/>
            <person name="Barry K."/>
            <person name="Glavina del Rio T."/>
            <person name="Dalin E."/>
            <person name="Tice H."/>
            <person name="Bruce D."/>
            <person name="Pitluck S."/>
            <person name="Lowry S.R."/>
            <person name="Larimer F."/>
            <person name="Land M.L."/>
            <person name="Hauser L."/>
            <person name="Kyrpides N."/>
            <person name="Ivanova N.N."/>
            <person name="Richardson P."/>
        </authorList>
    </citation>
    <scope>NUCLEOTIDE SEQUENCE [LARGE SCALE GENOMIC DNA]</scope>
    <source>
        <strain>MP104C</strain>
    </source>
</reference>
<protein>
    <recommendedName>
        <fullName evidence="1">UPF0756 membrane protein Daud_1310</fullName>
    </recommendedName>
</protein>
<accession>B1I4G8</accession>
<name>Y1310_DESAP</name>
<gene>
    <name type="ordered locus">Daud_1310</name>
</gene>
<organism>
    <name type="scientific">Desulforudis audaxviator (strain MP104C)</name>
    <dbReference type="NCBI Taxonomy" id="477974"/>
    <lineage>
        <taxon>Bacteria</taxon>
        <taxon>Bacillati</taxon>
        <taxon>Bacillota</taxon>
        <taxon>Clostridia</taxon>
        <taxon>Thermoanaerobacterales</taxon>
        <taxon>Candidatus Desulforudaceae</taxon>
        <taxon>Candidatus Desulforudis</taxon>
    </lineage>
</organism>
<evidence type="ECO:0000255" key="1">
    <source>
        <dbReference type="HAMAP-Rule" id="MF_01874"/>
    </source>
</evidence>
<keyword id="KW-1003">Cell membrane</keyword>
<keyword id="KW-0472">Membrane</keyword>
<keyword id="KW-1185">Reference proteome</keyword>
<keyword id="KW-0812">Transmembrane</keyword>
<keyword id="KW-1133">Transmembrane helix</keyword>
<dbReference type="EMBL" id="CP000860">
    <property type="protein sequence ID" value="ACA59821.1"/>
    <property type="molecule type" value="Genomic_DNA"/>
</dbReference>
<dbReference type="RefSeq" id="WP_012302406.1">
    <property type="nucleotide sequence ID" value="NC_010424.1"/>
</dbReference>
<dbReference type="SMR" id="B1I4G8"/>
<dbReference type="STRING" id="477974.Daud_1310"/>
<dbReference type="KEGG" id="dau:Daud_1310"/>
<dbReference type="eggNOG" id="COG2707">
    <property type="taxonomic scope" value="Bacteria"/>
</dbReference>
<dbReference type="HOGENOM" id="CLU_125889_1_0_9"/>
<dbReference type="Proteomes" id="UP000008544">
    <property type="component" value="Chromosome"/>
</dbReference>
<dbReference type="GO" id="GO:0005886">
    <property type="term" value="C:plasma membrane"/>
    <property type="evidence" value="ECO:0007669"/>
    <property type="project" value="UniProtKB-SubCell"/>
</dbReference>
<dbReference type="HAMAP" id="MF_01874">
    <property type="entry name" value="UPF0756"/>
    <property type="match status" value="1"/>
</dbReference>
<dbReference type="InterPro" id="IPR007382">
    <property type="entry name" value="UPF0756_TM"/>
</dbReference>
<dbReference type="PANTHER" id="PTHR38452">
    <property type="entry name" value="UPF0756 MEMBRANE PROTEIN YEAL"/>
    <property type="match status" value="1"/>
</dbReference>
<dbReference type="PANTHER" id="PTHR38452:SF1">
    <property type="entry name" value="UPF0756 MEMBRANE PROTEIN YEAL"/>
    <property type="match status" value="1"/>
</dbReference>
<dbReference type="Pfam" id="PF04284">
    <property type="entry name" value="DUF441"/>
    <property type="match status" value="1"/>
</dbReference>
<sequence>MPVTSELILAALLLVGVLAKSHLIAAAACILLFIKLARFDLAFNFLEQKGLELGLLILLLTIMVPLANGKISERDIIYNLTSIPGLLAILGGALATHLNSQGLQMMQADPAIIFGLIIGSIFGILFLGGMPVGPLMAAGIAALFMEFFKYTK</sequence>
<comment type="subcellular location">
    <subcellularLocation>
        <location evidence="1">Cell membrane</location>
        <topology evidence="1">Multi-pass membrane protein</topology>
    </subcellularLocation>
</comment>
<comment type="similarity">
    <text evidence="1">Belongs to the UPF0756 family.</text>
</comment>
<proteinExistence type="inferred from homology"/>